<reference key="1">
    <citation type="journal article" date="2002" name="Nature">
        <title>Genome sequence of the plant pathogen Ralstonia solanacearum.</title>
        <authorList>
            <person name="Salanoubat M."/>
            <person name="Genin S."/>
            <person name="Artiguenave F."/>
            <person name="Gouzy J."/>
            <person name="Mangenot S."/>
            <person name="Arlat M."/>
            <person name="Billault A."/>
            <person name="Brottier P."/>
            <person name="Camus J.-C."/>
            <person name="Cattolico L."/>
            <person name="Chandler M."/>
            <person name="Choisne N."/>
            <person name="Claudel-Renard C."/>
            <person name="Cunnac S."/>
            <person name="Demange N."/>
            <person name="Gaspin C."/>
            <person name="Lavie M."/>
            <person name="Moisan A."/>
            <person name="Robert C."/>
            <person name="Saurin W."/>
            <person name="Schiex T."/>
            <person name="Siguier P."/>
            <person name="Thebault P."/>
            <person name="Whalen M."/>
            <person name="Wincker P."/>
            <person name="Levy M."/>
            <person name="Weissenbach J."/>
            <person name="Boucher C.A."/>
        </authorList>
    </citation>
    <scope>NUCLEOTIDE SEQUENCE [LARGE SCALE GENOMIC DNA]</scope>
    <source>
        <strain>ATCC BAA-1114 / GMI1000</strain>
    </source>
</reference>
<dbReference type="EC" id="2.1.1.170" evidence="1"/>
<dbReference type="EMBL" id="AL646052">
    <property type="protein sequence ID" value="CAD17115.1"/>
    <property type="molecule type" value="Genomic_DNA"/>
</dbReference>
<dbReference type="RefSeq" id="WP_011003210.1">
    <property type="nucleotide sequence ID" value="NC_003295.1"/>
</dbReference>
<dbReference type="SMR" id="Q8XU66"/>
<dbReference type="STRING" id="267608.RSc3327"/>
<dbReference type="EnsemblBacteria" id="CAD17115">
    <property type="protein sequence ID" value="CAD17115"/>
    <property type="gene ID" value="RSc3327"/>
</dbReference>
<dbReference type="KEGG" id="rso:RSc3327"/>
<dbReference type="PATRIC" id="fig|267608.8.peg.3376"/>
<dbReference type="eggNOG" id="COG0357">
    <property type="taxonomic scope" value="Bacteria"/>
</dbReference>
<dbReference type="HOGENOM" id="CLU_065341_2_0_4"/>
<dbReference type="Proteomes" id="UP000001436">
    <property type="component" value="Chromosome"/>
</dbReference>
<dbReference type="GO" id="GO:0005829">
    <property type="term" value="C:cytosol"/>
    <property type="evidence" value="ECO:0007669"/>
    <property type="project" value="TreeGrafter"/>
</dbReference>
<dbReference type="GO" id="GO:0070043">
    <property type="term" value="F:rRNA (guanine-N7-)-methyltransferase activity"/>
    <property type="evidence" value="ECO:0007669"/>
    <property type="project" value="UniProtKB-UniRule"/>
</dbReference>
<dbReference type="Gene3D" id="3.40.50.150">
    <property type="entry name" value="Vaccinia Virus protein VP39"/>
    <property type="match status" value="1"/>
</dbReference>
<dbReference type="HAMAP" id="MF_00074">
    <property type="entry name" value="16SrRNA_methyltr_G"/>
    <property type="match status" value="1"/>
</dbReference>
<dbReference type="InterPro" id="IPR003682">
    <property type="entry name" value="rRNA_ssu_MeTfrase_G"/>
</dbReference>
<dbReference type="InterPro" id="IPR029063">
    <property type="entry name" value="SAM-dependent_MTases_sf"/>
</dbReference>
<dbReference type="NCBIfam" id="TIGR00138">
    <property type="entry name" value="rsmG_gidB"/>
    <property type="match status" value="1"/>
</dbReference>
<dbReference type="PANTHER" id="PTHR31760">
    <property type="entry name" value="S-ADENOSYL-L-METHIONINE-DEPENDENT METHYLTRANSFERASES SUPERFAMILY PROTEIN"/>
    <property type="match status" value="1"/>
</dbReference>
<dbReference type="PANTHER" id="PTHR31760:SF0">
    <property type="entry name" value="S-ADENOSYL-L-METHIONINE-DEPENDENT METHYLTRANSFERASES SUPERFAMILY PROTEIN"/>
    <property type="match status" value="1"/>
</dbReference>
<dbReference type="Pfam" id="PF02527">
    <property type="entry name" value="GidB"/>
    <property type="match status" value="1"/>
</dbReference>
<dbReference type="PIRSF" id="PIRSF003078">
    <property type="entry name" value="GidB"/>
    <property type="match status" value="1"/>
</dbReference>
<dbReference type="SUPFAM" id="SSF53335">
    <property type="entry name" value="S-adenosyl-L-methionine-dependent methyltransferases"/>
    <property type="match status" value="1"/>
</dbReference>
<organism>
    <name type="scientific">Ralstonia nicotianae (strain ATCC BAA-1114 / GMI1000)</name>
    <name type="common">Ralstonia solanacearum</name>
    <dbReference type="NCBI Taxonomy" id="267608"/>
    <lineage>
        <taxon>Bacteria</taxon>
        <taxon>Pseudomonadati</taxon>
        <taxon>Pseudomonadota</taxon>
        <taxon>Betaproteobacteria</taxon>
        <taxon>Burkholderiales</taxon>
        <taxon>Burkholderiaceae</taxon>
        <taxon>Ralstonia</taxon>
        <taxon>Ralstonia solanacearum species complex</taxon>
    </lineage>
</organism>
<feature type="chain" id="PRO_0000184312" description="Ribosomal RNA small subunit methyltransferase G">
    <location>
        <begin position="1"/>
        <end position="223"/>
    </location>
</feature>
<feature type="binding site" evidence="1">
    <location>
        <position position="90"/>
    </location>
    <ligand>
        <name>S-adenosyl-L-methionine</name>
        <dbReference type="ChEBI" id="CHEBI:59789"/>
    </ligand>
</feature>
<feature type="binding site" evidence="1">
    <location>
        <position position="95"/>
    </location>
    <ligand>
        <name>S-adenosyl-L-methionine</name>
        <dbReference type="ChEBI" id="CHEBI:59789"/>
    </ligand>
</feature>
<feature type="binding site" evidence="1">
    <location>
        <begin position="141"/>
        <end position="142"/>
    </location>
    <ligand>
        <name>S-adenosyl-L-methionine</name>
        <dbReference type="ChEBI" id="CHEBI:59789"/>
    </ligand>
</feature>
<feature type="binding site" evidence="1">
    <location>
        <position position="156"/>
    </location>
    <ligand>
        <name>S-adenosyl-L-methionine</name>
        <dbReference type="ChEBI" id="CHEBI:59789"/>
    </ligand>
</feature>
<accession>Q8XU66</accession>
<comment type="function">
    <text evidence="1">Specifically methylates the N7 position of guanine in position 527 of 16S rRNA.</text>
</comment>
<comment type="catalytic activity">
    <reaction evidence="1">
        <text>guanosine(527) in 16S rRNA + S-adenosyl-L-methionine = N(7)-methylguanosine(527) in 16S rRNA + S-adenosyl-L-homocysteine</text>
        <dbReference type="Rhea" id="RHEA:42732"/>
        <dbReference type="Rhea" id="RHEA-COMP:10209"/>
        <dbReference type="Rhea" id="RHEA-COMP:10210"/>
        <dbReference type="ChEBI" id="CHEBI:57856"/>
        <dbReference type="ChEBI" id="CHEBI:59789"/>
        <dbReference type="ChEBI" id="CHEBI:74269"/>
        <dbReference type="ChEBI" id="CHEBI:74480"/>
        <dbReference type="EC" id="2.1.1.170"/>
    </reaction>
</comment>
<comment type="subcellular location">
    <subcellularLocation>
        <location evidence="1">Cytoplasm</location>
    </subcellularLocation>
</comment>
<comment type="similarity">
    <text evidence="1">Belongs to the methyltransferase superfamily. RNA methyltransferase RsmG family.</text>
</comment>
<gene>
    <name evidence="1" type="primary">rsmG</name>
    <name type="ordered locus">RSc3327</name>
    <name type="ORF">RS02561</name>
</gene>
<name>RSMG_RALN1</name>
<keyword id="KW-0963">Cytoplasm</keyword>
<keyword id="KW-0489">Methyltransferase</keyword>
<keyword id="KW-1185">Reference proteome</keyword>
<keyword id="KW-0698">rRNA processing</keyword>
<keyword id="KW-0949">S-adenosyl-L-methionine</keyword>
<keyword id="KW-0808">Transferase</keyword>
<evidence type="ECO:0000255" key="1">
    <source>
        <dbReference type="HAMAP-Rule" id="MF_00074"/>
    </source>
</evidence>
<sequence>MANTALADTRSELEAGARALGLPLEGVQLDRLLAYQVLLAKWNRVYNLTAIRDAGDMLTHHLLDSLAAVPRIAELVRRVQPEASRVLDVGSGGGLPGIPLAIACPDIGVTMVDIVQKKTAFLTQCRAELGLTNAQSHWGHVEKLADAVGYGVITSRAFAELNDFVRLAGHLLAPGGRMVAMKGVRPDAEIARLPEGWAVESIERLTVPGLPAERHLVILAPSA</sequence>
<proteinExistence type="inferred from homology"/>
<protein>
    <recommendedName>
        <fullName evidence="1">Ribosomal RNA small subunit methyltransferase G</fullName>
        <ecNumber evidence="1">2.1.1.170</ecNumber>
    </recommendedName>
    <alternativeName>
        <fullName evidence="1">16S rRNA 7-methylguanosine methyltransferase</fullName>
        <shortName evidence="1">16S rRNA m7G methyltransferase</shortName>
    </alternativeName>
</protein>